<accession>B1J176</accession>
<protein>
    <recommendedName>
        <fullName evidence="1">Cyclic pyranopterin monophosphate synthase</fullName>
        <ecNumber evidence="1">4.6.1.17</ecNumber>
    </recommendedName>
    <alternativeName>
        <fullName evidence="1">Molybdenum cofactor biosynthesis protein C</fullName>
    </alternativeName>
</protein>
<organism>
    <name type="scientific">Pseudomonas putida (strain W619)</name>
    <dbReference type="NCBI Taxonomy" id="390235"/>
    <lineage>
        <taxon>Bacteria</taxon>
        <taxon>Pseudomonadati</taxon>
        <taxon>Pseudomonadota</taxon>
        <taxon>Gammaproteobacteria</taxon>
        <taxon>Pseudomonadales</taxon>
        <taxon>Pseudomonadaceae</taxon>
        <taxon>Pseudomonas</taxon>
    </lineage>
</organism>
<keyword id="KW-0456">Lyase</keyword>
<keyword id="KW-0501">Molybdenum cofactor biosynthesis</keyword>
<proteinExistence type="inferred from homology"/>
<gene>
    <name evidence="1" type="primary">moaC</name>
    <name type="ordered locus">PputW619_0899</name>
</gene>
<feature type="chain" id="PRO_1000139286" description="Cyclic pyranopterin monophosphate synthase">
    <location>
        <begin position="1"/>
        <end position="156"/>
    </location>
</feature>
<feature type="active site" evidence="1">
    <location>
        <position position="125"/>
    </location>
</feature>
<feature type="binding site" evidence="1">
    <location>
        <begin position="73"/>
        <end position="75"/>
    </location>
    <ligand>
        <name>substrate</name>
    </ligand>
</feature>
<feature type="binding site" evidence="1">
    <location>
        <begin position="110"/>
        <end position="111"/>
    </location>
    <ligand>
        <name>substrate</name>
    </ligand>
</feature>
<dbReference type="EC" id="4.6.1.17" evidence="1"/>
<dbReference type="EMBL" id="CP000949">
    <property type="protein sequence ID" value="ACA71404.1"/>
    <property type="molecule type" value="Genomic_DNA"/>
</dbReference>
<dbReference type="SMR" id="B1J176"/>
<dbReference type="STRING" id="390235.PputW619_0899"/>
<dbReference type="KEGG" id="ppw:PputW619_0899"/>
<dbReference type="eggNOG" id="COG0315">
    <property type="taxonomic scope" value="Bacteria"/>
</dbReference>
<dbReference type="HOGENOM" id="CLU_074693_1_1_6"/>
<dbReference type="OrthoDB" id="9794429at2"/>
<dbReference type="UniPathway" id="UPA00344"/>
<dbReference type="GO" id="GO:0061799">
    <property type="term" value="F:cyclic pyranopterin monophosphate synthase activity"/>
    <property type="evidence" value="ECO:0007669"/>
    <property type="project" value="UniProtKB-UniRule"/>
</dbReference>
<dbReference type="GO" id="GO:0006777">
    <property type="term" value="P:Mo-molybdopterin cofactor biosynthetic process"/>
    <property type="evidence" value="ECO:0007669"/>
    <property type="project" value="UniProtKB-UniRule"/>
</dbReference>
<dbReference type="CDD" id="cd01420">
    <property type="entry name" value="MoaC_PE"/>
    <property type="match status" value="1"/>
</dbReference>
<dbReference type="FunFam" id="3.30.70.640:FF:000001">
    <property type="entry name" value="Cyclic pyranopterin monophosphate synthase"/>
    <property type="match status" value="1"/>
</dbReference>
<dbReference type="Gene3D" id="3.30.70.640">
    <property type="entry name" value="Molybdopterin cofactor biosynthesis C (MoaC) domain"/>
    <property type="match status" value="1"/>
</dbReference>
<dbReference type="HAMAP" id="MF_01224_B">
    <property type="entry name" value="MoaC_B"/>
    <property type="match status" value="1"/>
</dbReference>
<dbReference type="InterPro" id="IPR023045">
    <property type="entry name" value="MoaC"/>
</dbReference>
<dbReference type="InterPro" id="IPR047594">
    <property type="entry name" value="MoaC_bact/euk"/>
</dbReference>
<dbReference type="InterPro" id="IPR036522">
    <property type="entry name" value="MoaC_sf"/>
</dbReference>
<dbReference type="InterPro" id="IPR050105">
    <property type="entry name" value="MoCo_biosynth_MoaA/MoaC"/>
</dbReference>
<dbReference type="InterPro" id="IPR002820">
    <property type="entry name" value="Mopterin_CF_biosynth-C_dom"/>
</dbReference>
<dbReference type="NCBIfam" id="TIGR00581">
    <property type="entry name" value="moaC"/>
    <property type="match status" value="1"/>
</dbReference>
<dbReference type="NCBIfam" id="NF006870">
    <property type="entry name" value="PRK09364.1"/>
    <property type="match status" value="1"/>
</dbReference>
<dbReference type="PANTHER" id="PTHR22960:SF29">
    <property type="entry name" value="CYCLIC PYRANOPTERIN MONOPHOSPHATE SYNTHASE"/>
    <property type="match status" value="1"/>
</dbReference>
<dbReference type="PANTHER" id="PTHR22960">
    <property type="entry name" value="MOLYBDOPTERIN COFACTOR SYNTHESIS PROTEIN A"/>
    <property type="match status" value="1"/>
</dbReference>
<dbReference type="Pfam" id="PF01967">
    <property type="entry name" value="MoaC"/>
    <property type="match status" value="1"/>
</dbReference>
<dbReference type="SUPFAM" id="SSF55040">
    <property type="entry name" value="Molybdenum cofactor biosynthesis protein C, MoaC"/>
    <property type="match status" value="1"/>
</dbReference>
<evidence type="ECO:0000255" key="1">
    <source>
        <dbReference type="HAMAP-Rule" id="MF_01224"/>
    </source>
</evidence>
<reference key="1">
    <citation type="submission" date="2008-02" db="EMBL/GenBank/DDBJ databases">
        <title>Complete sequence of Pseudomonas putida W619.</title>
        <authorList>
            <person name="Copeland A."/>
            <person name="Lucas S."/>
            <person name="Lapidus A."/>
            <person name="Barry K."/>
            <person name="Detter J.C."/>
            <person name="Glavina del Rio T."/>
            <person name="Dalin E."/>
            <person name="Tice H."/>
            <person name="Pitluck S."/>
            <person name="Chain P."/>
            <person name="Malfatti S."/>
            <person name="Shin M."/>
            <person name="Vergez L."/>
            <person name="Schmutz J."/>
            <person name="Larimer F."/>
            <person name="Land M."/>
            <person name="Hauser L."/>
            <person name="Kyrpides N."/>
            <person name="Kim E."/>
            <person name="Taghavi S."/>
            <person name="Vangronsveld D."/>
            <person name="van der Lelie D."/>
            <person name="Richardson P."/>
        </authorList>
    </citation>
    <scope>NUCLEOTIDE SEQUENCE [LARGE SCALE GENOMIC DNA]</scope>
    <source>
        <strain>W619</strain>
    </source>
</reference>
<name>MOAC_PSEPW</name>
<sequence>MLTHLDSQGRANMVDVTEKAVTEREATAEARVRMLPQTLQMIVEGEHPKGDVFAVARIAGIQAAKKTSDLIPLCHPLMLTSVKVELSAEGTDAVRIVARCKLAGQTGVEMEALTAASVAALTIYDMCKAVDKGMVIEQVRLLEKLGGKSGHYKVDA</sequence>
<comment type="function">
    <text evidence="1">Catalyzes the conversion of (8S)-3',8-cyclo-7,8-dihydroguanosine 5'-triphosphate to cyclic pyranopterin monophosphate (cPMP).</text>
</comment>
<comment type="catalytic activity">
    <reaction evidence="1">
        <text>(8S)-3',8-cyclo-7,8-dihydroguanosine 5'-triphosphate = cyclic pyranopterin phosphate + diphosphate</text>
        <dbReference type="Rhea" id="RHEA:49580"/>
        <dbReference type="ChEBI" id="CHEBI:33019"/>
        <dbReference type="ChEBI" id="CHEBI:59648"/>
        <dbReference type="ChEBI" id="CHEBI:131766"/>
        <dbReference type="EC" id="4.6.1.17"/>
    </reaction>
</comment>
<comment type="pathway">
    <text evidence="1">Cofactor biosynthesis; molybdopterin biosynthesis.</text>
</comment>
<comment type="subunit">
    <text evidence="1">Homohexamer; trimer of dimers.</text>
</comment>
<comment type="similarity">
    <text evidence="1">Belongs to the MoaC family.</text>
</comment>